<organism>
    <name type="scientific">Eremothecium gossypii (strain ATCC 10895 / CBS 109.51 / FGSC 9923 / NRRL Y-1056)</name>
    <name type="common">Yeast</name>
    <name type="synonym">Ashbya gossypii</name>
    <dbReference type="NCBI Taxonomy" id="284811"/>
    <lineage>
        <taxon>Eukaryota</taxon>
        <taxon>Fungi</taxon>
        <taxon>Dikarya</taxon>
        <taxon>Ascomycota</taxon>
        <taxon>Saccharomycotina</taxon>
        <taxon>Saccharomycetes</taxon>
        <taxon>Saccharomycetales</taxon>
        <taxon>Saccharomycetaceae</taxon>
        <taxon>Eremothecium</taxon>
    </lineage>
</organism>
<evidence type="ECO:0000250" key="1"/>
<evidence type="ECO:0000256" key="2">
    <source>
        <dbReference type="SAM" id="MobiDB-lite"/>
    </source>
</evidence>
<dbReference type="EMBL" id="AE016815">
    <property type="protein sequence ID" value="AAS50609.2"/>
    <property type="molecule type" value="Genomic_DNA"/>
</dbReference>
<dbReference type="RefSeq" id="NP_982785.2">
    <property type="nucleotide sequence ID" value="NM_208138.2"/>
</dbReference>
<dbReference type="SMR" id="Q75E32"/>
<dbReference type="FunCoup" id="Q75E32">
    <property type="interactions" value="957"/>
</dbReference>
<dbReference type="STRING" id="284811.Q75E32"/>
<dbReference type="EnsemblFungi" id="AAS50609">
    <property type="protein sequence ID" value="AAS50609"/>
    <property type="gene ID" value="AGOS_ABL162C"/>
</dbReference>
<dbReference type="GeneID" id="4618865"/>
<dbReference type="KEGG" id="ago:AGOS_ABL162C"/>
<dbReference type="eggNOG" id="KOG2175">
    <property type="taxonomic scope" value="Eukaryota"/>
</dbReference>
<dbReference type="HOGENOM" id="CLU_004909_4_0_1"/>
<dbReference type="InParanoid" id="Q75E32"/>
<dbReference type="OMA" id="YHRYMIS"/>
<dbReference type="OrthoDB" id="27483at2759"/>
<dbReference type="Proteomes" id="UP000000591">
    <property type="component" value="Chromosome II"/>
</dbReference>
<dbReference type="GO" id="GO:0005654">
    <property type="term" value="C:nucleoplasm"/>
    <property type="evidence" value="ECO:0000318"/>
    <property type="project" value="GO_Central"/>
</dbReference>
<dbReference type="GO" id="GO:0030289">
    <property type="term" value="C:protein phosphatase 4 complex"/>
    <property type="evidence" value="ECO:0000318"/>
    <property type="project" value="GO_Central"/>
</dbReference>
<dbReference type="GO" id="GO:0072542">
    <property type="term" value="F:protein phosphatase activator activity"/>
    <property type="evidence" value="ECO:0000318"/>
    <property type="project" value="GO_Central"/>
</dbReference>
<dbReference type="GO" id="GO:0006974">
    <property type="term" value="P:DNA damage response"/>
    <property type="evidence" value="ECO:0000318"/>
    <property type="project" value="GO_Central"/>
</dbReference>
<dbReference type="GO" id="GO:0051598">
    <property type="term" value="P:meiotic recombination checkpoint signaling"/>
    <property type="evidence" value="ECO:0007669"/>
    <property type="project" value="EnsemblFungi"/>
</dbReference>
<dbReference type="GO" id="GO:2000002">
    <property type="term" value="P:negative regulation of DNA damage checkpoint"/>
    <property type="evidence" value="ECO:0007669"/>
    <property type="project" value="EnsemblFungi"/>
</dbReference>
<dbReference type="GO" id="GO:1902660">
    <property type="term" value="P:negative regulation of glucose mediated signaling pathway"/>
    <property type="evidence" value="ECO:0007669"/>
    <property type="project" value="EnsemblFungi"/>
</dbReference>
<dbReference type="GO" id="GO:2001034">
    <property type="term" value="P:positive regulation of double-strand break repair via nonhomologous end joining"/>
    <property type="evidence" value="ECO:0007669"/>
    <property type="project" value="EnsemblFungi"/>
</dbReference>
<dbReference type="GO" id="GO:2000779">
    <property type="term" value="P:regulation of double-strand break repair"/>
    <property type="evidence" value="ECO:0000318"/>
    <property type="project" value="GO_Central"/>
</dbReference>
<dbReference type="FunFam" id="2.30.29.30:FF:000455">
    <property type="entry name" value="Psy2p"/>
    <property type="match status" value="1"/>
</dbReference>
<dbReference type="Gene3D" id="2.30.29.30">
    <property type="entry name" value="Pleckstrin-homology domain (PH domain)/Phosphotyrosine-binding domain (PTB)"/>
    <property type="match status" value="1"/>
</dbReference>
<dbReference type="InterPro" id="IPR055236">
    <property type="entry name" value="EVH1_PP4R3"/>
</dbReference>
<dbReference type="InterPro" id="IPR006887">
    <property type="entry name" value="P4R3-like_central_dom"/>
</dbReference>
<dbReference type="InterPro" id="IPR011993">
    <property type="entry name" value="PH-like_dom_sf"/>
</dbReference>
<dbReference type="InterPro" id="IPR051137">
    <property type="entry name" value="PP4R3-like"/>
</dbReference>
<dbReference type="PANTHER" id="PTHR23318">
    <property type="entry name" value="ATP SYNTHASE GAMMA-RELATED"/>
    <property type="match status" value="1"/>
</dbReference>
<dbReference type="PANTHER" id="PTHR23318:SF0">
    <property type="entry name" value="SERINE_THREONINE-PROTEIN PHOSPHATASE 4 REGULATORY SUBUNIT 3"/>
    <property type="match status" value="1"/>
</dbReference>
<dbReference type="Pfam" id="PF22972">
    <property type="entry name" value="EVH1_PP4R3"/>
    <property type="match status" value="1"/>
</dbReference>
<dbReference type="Pfam" id="PF04802">
    <property type="entry name" value="PP4R3"/>
    <property type="match status" value="1"/>
</dbReference>
<dbReference type="SUPFAM" id="SSF50729">
    <property type="entry name" value="PH domain-like"/>
    <property type="match status" value="1"/>
</dbReference>
<sequence length="838" mass="94911">MAKESLRIGVASTEPKRVKVYILEDNEWRDTGTGFCTGQCEQDKPHAYLLVRDEEQPERVLLKSKLEGNIEYQRQEETLIVWKDLQGQDIALSFEESTGCNALCEFICLVQKTFENNISLVSVRSNDDGMGSVHEIITGPVHLPSNDPQQNEETLMESLRILNENTSFEFLKNETVDFILNTNYLHTLINHFHIAEEKLLHKDLLLLSHIIKTLFLYNEREVLEQLIDDKHYMGVVGILEYDTDFPDCKASHRKCLQGVRPKFQEVIPLNDENMRQTINKTFRLQFLKDVVLIRFLDDHAFNLITDVMLTYQTTIIRCLQEGSFIDDLVNLYTNNADTSDSDLIERKRQGIRLLDECVQISCNLDPPDRSIFYKVLVKKGLFNVLDFAFNVETNSDIRILATDMIISIIEYDILLINSVRNEVDDSPFAATNEDSNINTGLIDEGGADSADNNCNGNSAVKAGESNGAESPIAPPGSRSPSRHTSDISLLLILSKILLTDQSPGLKEQAFQALITLLDPEDFMGEEYEDQSNLESLMKFYANSKLREKPSTPPQFQLLEYFTKFYEQVAPVLFQSFISGEVEGMDDQLLLRLVKLVDLLIHEHDIMLSRGFILENGILLTIGKLMEPSHIIQLRLAAVRCIKGIVAVNDEFYHNYLISKNLFDPICQLLQENLYFDNMANSCVLDLFKVISARFGQDQEYAEVSTKNFLVLNQYLVERFGPLLEKVDYVPYTSSMIQMSRVGRDAINKQQDNNGERNTTTGGEADNEEFDVMGAMDSSLASESDGENNENNEESPYGGAQNSKRSFSDIEDNTIGVEKGNPEPGLPIKKLAEEISESS</sequence>
<reference key="1">
    <citation type="journal article" date="2004" name="Science">
        <title>The Ashbya gossypii genome as a tool for mapping the ancient Saccharomyces cerevisiae genome.</title>
        <authorList>
            <person name="Dietrich F.S."/>
            <person name="Voegeli S."/>
            <person name="Brachat S."/>
            <person name="Lerch A."/>
            <person name="Gates K."/>
            <person name="Steiner S."/>
            <person name="Mohr C."/>
            <person name="Poehlmann R."/>
            <person name="Luedi P."/>
            <person name="Choi S."/>
            <person name="Wing R.A."/>
            <person name="Flavier A."/>
            <person name="Gaffney T.D."/>
            <person name="Philippsen P."/>
        </authorList>
    </citation>
    <scope>NUCLEOTIDE SEQUENCE [LARGE SCALE GENOMIC DNA]</scope>
    <source>
        <strain>ATCC 10895 / CBS 109.51 / FGSC 9923 / NRRL Y-1056</strain>
    </source>
</reference>
<reference key="2">
    <citation type="journal article" date="2013" name="G3 (Bethesda)">
        <title>Genomes of Ashbya fungi isolated from insects reveal four mating-type loci, numerous translocations, lack of transposons, and distinct gene duplications.</title>
        <authorList>
            <person name="Dietrich F.S."/>
            <person name="Voegeli S."/>
            <person name="Kuo S."/>
            <person name="Philippsen P."/>
        </authorList>
    </citation>
    <scope>GENOME REANNOTATION</scope>
    <scope>SEQUENCE REVISION TO 633 AND C-TERMINUS</scope>
    <source>
        <strain>ATCC 10895 / CBS 109.51 / FGSC 9923 / NRRL Y-1056</strain>
    </source>
</reference>
<protein>
    <recommendedName>
        <fullName>Serine/threonine-protein phosphatase 4 regulatory subunit 3</fullName>
        <shortName>PP4R3</shortName>
    </recommendedName>
</protein>
<proteinExistence type="inferred from homology"/>
<keyword id="KW-0539">Nucleus</keyword>
<keyword id="KW-1185">Reference proteome</keyword>
<comment type="function">
    <text evidence="1">Core regulatory subunit of the histone H2A phosphatase complex, which dephosphorylates H2AS128ph (gamma-H2A) that has been displaced from sites of DNA lesions in the double-stranded DNA break repair process. Dephosphorylation is necessary for efficient recovery from the DNA damage checkpoint (By similarity).</text>
</comment>
<comment type="subunit">
    <text evidence="1">Regulatory subunit 3 (R3) of the histone H2A phosphatase complex (HTP-C) consisting of PPH3, PSY2 and PSY4.</text>
</comment>
<comment type="subcellular location">
    <subcellularLocation>
        <location evidence="1">Nucleus</location>
    </subcellularLocation>
</comment>
<name>PP4R3_EREGS</name>
<feature type="chain" id="PRO_0000223655" description="Serine/threonine-protein phosphatase 4 regulatory subunit 3">
    <location>
        <begin position="1"/>
        <end position="838"/>
    </location>
</feature>
<feature type="region of interest" description="Disordered" evidence="2">
    <location>
        <begin position="452"/>
        <end position="482"/>
    </location>
</feature>
<feature type="region of interest" description="Disordered" evidence="2">
    <location>
        <begin position="745"/>
        <end position="838"/>
    </location>
</feature>
<feature type="compositionally biased region" description="Polar residues" evidence="2">
    <location>
        <begin position="747"/>
        <end position="761"/>
    </location>
</feature>
<feature type="compositionally biased region" description="Acidic residues" evidence="2">
    <location>
        <begin position="783"/>
        <end position="792"/>
    </location>
</feature>
<accession>Q75E32</accession>
<gene>
    <name type="primary">PSY2</name>
    <name type="ordered locus">ABL162C</name>
</gene>